<accession>Q8ZBP5</accession>
<accession>Q0WBT3</accession>
<protein>
    <recommendedName>
        <fullName evidence="1">Cell division protein FtsB</fullName>
    </recommendedName>
</protein>
<feature type="chain" id="PRO_0000214465" description="Cell division protein FtsB">
    <location>
        <begin position="1"/>
        <end position="106"/>
    </location>
</feature>
<feature type="topological domain" description="Cytoplasmic" evidence="1">
    <location>
        <begin position="1"/>
        <end position="3"/>
    </location>
</feature>
<feature type="transmembrane region" description="Helical" evidence="1">
    <location>
        <begin position="4"/>
        <end position="21"/>
    </location>
</feature>
<feature type="topological domain" description="Periplasmic" evidence="1">
    <location>
        <begin position="22"/>
        <end position="106"/>
    </location>
</feature>
<feature type="coiled-coil region" evidence="1">
    <location>
        <begin position="31"/>
        <end position="62"/>
    </location>
</feature>
<sequence>MGKLTLLLLVLLGWLQYSLWLGKNGIHDFVRVKEDVAAQEANNSTLKARNDQLFAEIDDLNGGQEAIEERARNELGMIKPGESFYRLVPDQSRRNAGTPSTQNNAQ</sequence>
<reference key="1">
    <citation type="journal article" date="2001" name="Nature">
        <title>Genome sequence of Yersinia pestis, the causative agent of plague.</title>
        <authorList>
            <person name="Parkhill J."/>
            <person name="Wren B.W."/>
            <person name="Thomson N.R."/>
            <person name="Titball R.W."/>
            <person name="Holden M.T.G."/>
            <person name="Prentice M.B."/>
            <person name="Sebaihia M."/>
            <person name="James K.D."/>
            <person name="Churcher C.M."/>
            <person name="Mungall K.L."/>
            <person name="Baker S."/>
            <person name="Basham D."/>
            <person name="Bentley S.D."/>
            <person name="Brooks K."/>
            <person name="Cerdeno-Tarraga A.-M."/>
            <person name="Chillingworth T."/>
            <person name="Cronin A."/>
            <person name="Davies R.M."/>
            <person name="Davis P."/>
            <person name="Dougan G."/>
            <person name="Feltwell T."/>
            <person name="Hamlin N."/>
            <person name="Holroyd S."/>
            <person name="Jagels K."/>
            <person name="Karlyshev A.V."/>
            <person name="Leather S."/>
            <person name="Moule S."/>
            <person name="Oyston P.C.F."/>
            <person name="Quail M.A."/>
            <person name="Rutherford K.M."/>
            <person name="Simmonds M."/>
            <person name="Skelton J."/>
            <person name="Stevens K."/>
            <person name="Whitehead S."/>
            <person name="Barrell B.G."/>
        </authorList>
    </citation>
    <scope>NUCLEOTIDE SEQUENCE [LARGE SCALE GENOMIC DNA]</scope>
    <source>
        <strain>CO-92 / Biovar Orientalis</strain>
    </source>
</reference>
<reference key="2">
    <citation type="journal article" date="2002" name="J. Bacteriol.">
        <title>Genome sequence of Yersinia pestis KIM.</title>
        <authorList>
            <person name="Deng W."/>
            <person name="Burland V."/>
            <person name="Plunkett G. III"/>
            <person name="Boutin A."/>
            <person name="Mayhew G.F."/>
            <person name="Liss P."/>
            <person name="Perna N.T."/>
            <person name="Rose D.J."/>
            <person name="Mau B."/>
            <person name="Zhou S."/>
            <person name="Schwartz D.C."/>
            <person name="Fetherston J.D."/>
            <person name="Lindler L.E."/>
            <person name="Brubaker R.R."/>
            <person name="Plano G.V."/>
            <person name="Straley S.C."/>
            <person name="McDonough K.A."/>
            <person name="Nilles M.L."/>
            <person name="Matson J.S."/>
            <person name="Blattner F.R."/>
            <person name="Perry R.D."/>
        </authorList>
    </citation>
    <scope>NUCLEOTIDE SEQUENCE [LARGE SCALE GENOMIC DNA]</scope>
    <source>
        <strain>KIM10+ / Biovar Mediaevalis</strain>
    </source>
</reference>
<reference key="3">
    <citation type="journal article" date="2004" name="DNA Res.">
        <title>Complete genome sequence of Yersinia pestis strain 91001, an isolate avirulent to humans.</title>
        <authorList>
            <person name="Song Y."/>
            <person name="Tong Z."/>
            <person name="Wang J."/>
            <person name="Wang L."/>
            <person name="Guo Z."/>
            <person name="Han Y."/>
            <person name="Zhang J."/>
            <person name="Pei D."/>
            <person name="Zhou D."/>
            <person name="Qin H."/>
            <person name="Pang X."/>
            <person name="Han Y."/>
            <person name="Zhai J."/>
            <person name="Li M."/>
            <person name="Cui B."/>
            <person name="Qi Z."/>
            <person name="Jin L."/>
            <person name="Dai R."/>
            <person name="Chen F."/>
            <person name="Li S."/>
            <person name="Ye C."/>
            <person name="Du Z."/>
            <person name="Lin W."/>
            <person name="Wang J."/>
            <person name="Yu J."/>
            <person name="Yang H."/>
            <person name="Wang J."/>
            <person name="Huang P."/>
            <person name="Yang R."/>
        </authorList>
    </citation>
    <scope>NUCLEOTIDE SEQUENCE [LARGE SCALE GENOMIC DNA]</scope>
    <source>
        <strain>91001 / Biovar Mediaevalis</strain>
    </source>
</reference>
<evidence type="ECO:0000255" key="1">
    <source>
        <dbReference type="HAMAP-Rule" id="MF_00599"/>
    </source>
</evidence>
<gene>
    <name evidence="1" type="primary">ftsB</name>
    <name type="ordered locus">YPO3362</name>
    <name type="ordered locus">y0827</name>
    <name type="ordered locus">YP_0325</name>
</gene>
<keyword id="KW-0131">Cell cycle</keyword>
<keyword id="KW-0132">Cell division</keyword>
<keyword id="KW-0997">Cell inner membrane</keyword>
<keyword id="KW-1003">Cell membrane</keyword>
<keyword id="KW-0175">Coiled coil</keyword>
<keyword id="KW-0472">Membrane</keyword>
<keyword id="KW-1185">Reference proteome</keyword>
<keyword id="KW-0812">Transmembrane</keyword>
<keyword id="KW-1133">Transmembrane helix</keyword>
<organism>
    <name type="scientific">Yersinia pestis</name>
    <dbReference type="NCBI Taxonomy" id="632"/>
    <lineage>
        <taxon>Bacteria</taxon>
        <taxon>Pseudomonadati</taxon>
        <taxon>Pseudomonadota</taxon>
        <taxon>Gammaproteobacteria</taxon>
        <taxon>Enterobacterales</taxon>
        <taxon>Yersiniaceae</taxon>
        <taxon>Yersinia</taxon>
    </lineage>
</organism>
<proteinExistence type="inferred from homology"/>
<comment type="function">
    <text evidence="1">Essential cell division protein. May link together the upstream cell division proteins, which are predominantly cytoplasmic, with the downstream cell division proteins, which are predominantly periplasmic.</text>
</comment>
<comment type="subunit">
    <text evidence="1">Part of a complex composed of FtsB, FtsL and FtsQ.</text>
</comment>
<comment type="subcellular location">
    <subcellularLocation>
        <location evidence="1">Cell inner membrane</location>
        <topology evidence="1">Single-pass type II membrane protein</topology>
    </subcellularLocation>
    <text evidence="1">Localizes to the division septum.</text>
</comment>
<comment type="similarity">
    <text evidence="1">Belongs to the FtsB family.</text>
</comment>
<dbReference type="EMBL" id="AL590842">
    <property type="protein sequence ID" value="CAL21951.1"/>
    <property type="molecule type" value="Genomic_DNA"/>
</dbReference>
<dbReference type="EMBL" id="AE009952">
    <property type="protein sequence ID" value="AAM84412.1"/>
    <property type="molecule type" value="Genomic_DNA"/>
</dbReference>
<dbReference type="EMBL" id="AE017042">
    <property type="protein sequence ID" value="AAS60598.1"/>
    <property type="molecule type" value="Genomic_DNA"/>
</dbReference>
<dbReference type="PIR" id="AD0408">
    <property type="entry name" value="AD0408"/>
</dbReference>
<dbReference type="RefSeq" id="WP_002209390.1">
    <property type="nucleotide sequence ID" value="NZ_WUCM01000008.1"/>
</dbReference>
<dbReference type="RefSeq" id="YP_002348255.1">
    <property type="nucleotide sequence ID" value="NC_003143.1"/>
</dbReference>
<dbReference type="SMR" id="Q8ZBP5"/>
<dbReference type="IntAct" id="Q8ZBP5">
    <property type="interactions" value="2"/>
</dbReference>
<dbReference type="STRING" id="214092.YPO3362"/>
<dbReference type="PaxDb" id="214092-YPO3362"/>
<dbReference type="DNASU" id="1145774"/>
<dbReference type="EnsemblBacteria" id="AAS60598">
    <property type="protein sequence ID" value="AAS60598"/>
    <property type="gene ID" value="YP_0325"/>
</dbReference>
<dbReference type="GeneID" id="57975347"/>
<dbReference type="KEGG" id="ype:YPO3362"/>
<dbReference type="KEGG" id="ypk:y0827"/>
<dbReference type="KEGG" id="ypm:YP_0325"/>
<dbReference type="PATRIC" id="fig|214092.21.peg.3839"/>
<dbReference type="eggNOG" id="COG2919">
    <property type="taxonomic scope" value="Bacteria"/>
</dbReference>
<dbReference type="HOGENOM" id="CLU_134863_5_2_6"/>
<dbReference type="OMA" id="YELGMVK"/>
<dbReference type="OrthoDB" id="7061211at2"/>
<dbReference type="Proteomes" id="UP000000815">
    <property type="component" value="Chromosome"/>
</dbReference>
<dbReference type="Proteomes" id="UP000001019">
    <property type="component" value="Chromosome"/>
</dbReference>
<dbReference type="Proteomes" id="UP000002490">
    <property type="component" value="Chromosome"/>
</dbReference>
<dbReference type="GO" id="GO:0032153">
    <property type="term" value="C:cell division site"/>
    <property type="evidence" value="ECO:0007669"/>
    <property type="project" value="UniProtKB-UniRule"/>
</dbReference>
<dbReference type="GO" id="GO:0030428">
    <property type="term" value="C:cell septum"/>
    <property type="evidence" value="ECO:0000318"/>
    <property type="project" value="GO_Central"/>
</dbReference>
<dbReference type="GO" id="GO:0005886">
    <property type="term" value="C:plasma membrane"/>
    <property type="evidence" value="ECO:0007669"/>
    <property type="project" value="UniProtKB-SubCell"/>
</dbReference>
<dbReference type="GO" id="GO:0043093">
    <property type="term" value="P:FtsZ-dependent cytokinesis"/>
    <property type="evidence" value="ECO:0000318"/>
    <property type="project" value="GO_Central"/>
</dbReference>
<dbReference type="Gene3D" id="1.20.5.400">
    <property type="match status" value="1"/>
</dbReference>
<dbReference type="HAMAP" id="MF_00599">
    <property type="entry name" value="FtsB"/>
    <property type="match status" value="1"/>
</dbReference>
<dbReference type="InterPro" id="IPR023081">
    <property type="entry name" value="Cell_div_FtsB"/>
</dbReference>
<dbReference type="InterPro" id="IPR007060">
    <property type="entry name" value="FtsL/DivIC"/>
</dbReference>
<dbReference type="NCBIfam" id="NF002058">
    <property type="entry name" value="PRK00888.1"/>
    <property type="match status" value="1"/>
</dbReference>
<dbReference type="PANTHER" id="PTHR37485">
    <property type="entry name" value="CELL DIVISION PROTEIN FTSB"/>
    <property type="match status" value="1"/>
</dbReference>
<dbReference type="PANTHER" id="PTHR37485:SF1">
    <property type="entry name" value="CELL DIVISION PROTEIN FTSB"/>
    <property type="match status" value="1"/>
</dbReference>
<dbReference type="Pfam" id="PF04977">
    <property type="entry name" value="DivIC"/>
    <property type="match status" value="1"/>
</dbReference>
<name>FTSB_YERPE</name>